<evidence type="ECO:0000255" key="1">
    <source>
        <dbReference type="HAMAP-Rule" id="MF_00766"/>
    </source>
</evidence>
<reference key="1">
    <citation type="journal article" date="2005" name="Nucleic Acids Res.">
        <title>The genome sequence of Salmonella enterica serovar Choleraesuis, a highly invasive and resistant zoonotic pathogen.</title>
        <authorList>
            <person name="Chiu C.-H."/>
            <person name="Tang P."/>
            <person name="Chu C."/>
            <person name="Hu S."/>
            <person name="Bao Q."/>
            <person name="Yu J."/>
            <person name="Chou Y.-Y."/>
            <person name="Wang H.-S."/>
            <person name="Lee Y.-S."/>
        </authorList>
    </citation>
    <scope>NUCLEOTIDE SEQUENCE [LARGE SCALE GENOMIC DNA]</scope>
    <source>
        <strain>SC-B67</strain>
    </source>
</reference>
<organism>
    <name type="scientific">Salmonella choleraesuis (strain SC-B67)</name>
    <dbReference type="NCBI Taxonomy" id="321314"/>
    <lineage>
        <taxon>Bacteria</taxon>
        <taxon>Pseudomonadati</taxon>
        <taxon>Pseudomonadota</taxon>
        <taxon>Gammaproteobacteria</taxon>
        <taxon>Enterobacterales</taxon>
        <taxon>Enterobacteriaceae</taxon>
        <taxon>Salmonella</taxon>
    </lineage>
</organism>
<accession>Q57JE2</accession>
<protein>
    <recommendedName>
        <fullName evidence="1">Biosynthetic peptidoglycan transglycosylase</fullName>
        <ecNumber evidence="1">2.4.99.28</ecNumber>
    </recommendedName>
    <alternativeName>
        <fullName evidence="1">Glycan polymerase</fullName>
    </alternativeName>
    <alternativeName>
        <fullName evidence="1">Peptidoglycan glycosyltransferase MtgA</fullName>
        <shortName evidence="1">PGT</shortName>
    </alternativeName>
</protein>
<keyword id="KW-0997">Cell inner membrane</keyword>
<keyword id="KW-1003">Cell membrane</keyword>
<keyword id="KW-0133">Cell shape</keyword>
<keyword id="KW-0961">Cell wall biogenesis/degradation</keyword>
<keyword id="KW-0328">Glycosyltransferase</keyword>
<keyword id="KW-0472">Membrane</keyword>
<keyword id="KW-0573">Peptidoglycan synthesis</keyword>
<keyword id="KW-0808">Transferase</keyword>
<keyword id="KW-0812">Transmembrane</keyword>
<keyword id="KW-1133">Transmembrane helix</keyword>
<name>MTGA_SALCH</name>
<sequence>MSKRRIAPLTFLRRLLLRILAALAVFWGGGIALFSVVPVPFSAVMAERQISAWLGGEFGYVAHSDWVSMADISPWMGLAVIAAEDQKFPEHWGFDVPAIEKALAHNERNESRIRGASTLSQQTAKNLFLWDGRSWLRKGLEAGLTLGIETVWSKKRILTVYLNIAEFGDGIFGVEAAAQRYFHKPASRLSVSEAALLAAVLPNPLRYKANAPSGYVRSRQAWIMRQMRQLGGESFMTRNQLN</sequence>
<dbReference type="EC" id="2.4.99.28" evidence="1"/>
<dbReference type="EMBL" id="AE017220">
    <property type="protein sequence ID" value="AAX67170.1"/>
    <property type="molecule type" value="Genomic_DNA"/>
</dbReference>
<dbReference type="RefSeq" id="WP_000044648.1">
    <property type="nucleotide sequence ID" value="NC_006905.1"/>
</dbReference>
<dbReference type="SMR" id="Q57JE2"/>
<dbReference type="CAZy" id="GT51">
    <property type="family name" value="Glycosyltransferase Family 51"/>
</dbReference>
<dbReference type="KEGG" id="sec:SCH_3264"/>
<dbReference type="HOGENOM" id="CLU_006354_1_1_6"/>
<dbReference type="UniPathway" id="UPA00219"/>
<dbReference type="Proteomes" id="UP000000538">
    <property type="component" value="Chromosome"/>
</dbReference>
<dbReference type="GO" id="GO:0009274">
    <property type="term" value="C:peptidoglycan-based cell wall"/>
    <property type="evidence" value="ECO:0007669"/>
    <property type="project" value="InterPro"/>
</dbReference>
<dbReference type="GO" id="GO:0005886">
    <property type="term" value="C:plasma membrane"/>
    <property type="evidence" value="ECO:0007669"/>
    <property type="project" value="UniProtKB-SubCell"/>
</dbReference>
<dbReference type="GO" id="GO:0016763">
    <property type="term" value="F:pentosyltransferase activity"/>
    <property type="evidence" value="ECO:0007669"/>
    <property type="project" value="InterPro"/>
</dbReference>
<dbReference type="GO" id="GO:0008955">
    <property type="term" value="F:peptidoglycan glycosyltransferase activity"/>
    <property type="evidence" value="ECO:0007669"/>
    <property type="project" value="UniProtKB-UniRule"/>
</dbReference>
<dbReference type="GO" id="GO:0071555">
    <property type="term" value="P:cell wall organization"/>
    <property type="evidence" value="ECO:0007669"/>
    <property type="project" value="UniProtKB-KW"/>
</dbReference>
<dbReference type="GO" id="GO:0009252">
    <property type="term" value="P:peptidoglycan biosynthetic process"/>
    <property type="evidence" value="ECO:0007669"/>
    <property type="project" value="UniProtKB-UniRule"/>
</dbReference>
<dbReference type="GO" id="GO:0008360">
    <property type="term" value="P:regulation of cell shape"/>
    <property type="evidence" value="ECO:0007669"/>
    <property type="project" value="UniProtKB-KW"/>
</dbReference>
<dbReference type="Gene3D" id="1.10.3810.10">
    <property type="entry name" value="Biosynthetic peptidoglycan transglycosylase-like"/>
    <property type="match status" value="1"/>
</dbReference>
<dbReference type="HAMAP" id="MF_00766">
    <property type="entry name" value="PGT_MtgA"/>
    <property type="match status" value="1"/>
</dbReference>
<dbReference type="InterPro" id="IPR001264">
    <property type="entry name" value="Glyco_trans_51"/>
</dbReference>
<dbReference type="InterPro" id="IPR023346">
    <property type="entry name" value="Lysozyme-like_dom_sf"/>
</dbReference>
<dbReference type="InterPro" id="IPR036950">
    <property type="entry name" value="PBP_transglycosylase"/>
</dbReference>
<dbReference type="InterPro" id="IPR011812">
    <property type="entry name" value="Pep_trsgly"/>
</dbReference>
<dbReference type="NCBIfam" id="TIGR02070">
    <property type="entry name" value="mono_pep_trsgly"/>
    <property type="match status" value="1"/>
</dbReference>
<dbReference type="PANTHER" id="PTHR30400:SF0">
    <property type="entry name" value="BIOSYNTHETIC PEPTIDOGLYCAN TRANSGLYCOSYLASE"/>
    <property type="match status" value="1"/>
</dbReference>
<dbReference type="PANTHER" id="PTHR30400">
    <property type="entry name" value="MONOFUNCTIONAL BIOSYNTHETIC PEPTIDOGLYCAN TRANSGLYCOSYLASE"/>
    <property type="match status" value="1"/>
</dbReference>
<dbReference type="Pfam" id="PF00912">
    <property type="entry name" value="Transgly"/>
    <property type="match status" value="1"/>
</dbReference>
<dbReference type="SUPFAM" id="SSF53955">
    <property type="entry name" value="Lysozyme-like"/>
    <property type="match status" value="1"/>
</dbReference>
<gene>
    <name evidence="1" type="primary">mtgA</name>
    <name type="ordered locus">SCH_3264</name>
</gene>
<proteinExistence type="inferred from homology"/>
<feature type="chain" id="PRO_0000257690" description="Biosynthetic peptidoglycan transglycosylase">
    <location>
        <begin position="1"/>
        <end position="242"/>
    </location>
</feature>
<feature type="transmembrane region" description="Helical" evidence="1">
    <location>
        <begin position="19"/>
        <end position="39"/>
    </location>
</feature>
<comment type="function">
    <text evidence="1">Peptidoglycan polymerase that catalyzes glycan chain elongation from lipid-linked precursors.</text>
</comment>
<comment type="catalytic activity">
    <reaction evidence="1">
        <text>[GlcNAc-(1-&gt;4)-Mur2Ac(oyl-L-Ala-gamma-D-Glu-L-Lys-D-Ala-D-Ala)](n)-di-trans,octa-cis-undecaprenyl diphosphate + beta-D-GlcNAc-(1-&gt;4)-Mur2Ac(oyl-L-Ala-gamma-D-Glu-L-Lys-D-Ala-D-Ala)-di-trans,octa-cis-undecaprenyl diphosphate = [GlcNAc-(1-&gt;4)-Mur2Ac(oyl-L-Ala-gamma-D-Glu-L-Lys-D-Ala-D-Ala)](n+1)-di-trans,octa-cis-undecaprenyl diphosphate + di-trans,octa-cis-undecaprenyl diphosphate + H(+)</text>
        <dbReference type="Rhea" id="RHEA:23708"/>
        <dbReference type="Rhea" id="RHEA-COMP:9602"/>
        <dbReference type="Rhea" id="RHEA-COMP:9603"/>
        <dbReference type="ChEBI" id="CHEBI:15378"/>
        <dbReference type="ChEBI" id="CHEBI:58405"/>
        <dbReference type="ChEBI" id="CHEBI:60033"/>
        <dbReference type="ChEBI" id="CHEBI:78435"/>
        <dbReference type="EC" id="2.4.99.28"/>
    </reaction>
</comment>
<comment type="pathway">
    <text evidence="1">Cell wall biogenesis; peptidoglycan biosynthesis.</text>
</comment>
<comment type="subcellular location">
    <subcellularLocation>
        <location evidence="1">Cell inner membrane</location>
        <topology evidence="1">Single-pass membrane protein</topology>
    </subcellularLocation>
</comment>
<comment type="similarity">
    <text evidence="1">Belongs to the glycosyltransferase 51 family.</text>
</comment>